<accession>A5FHV7</accession>
<organism>
    <name type="scientific">Flavobacterium johnsoniae (strain ATCC 17061 / DSM 2064 / JCM 8514 / BCRC 14874 / CCUG 350202 / NBRC 14942 / NCIMB 11054 / UW101)</name>
    <name type="common">Cytophaga johnsonae</name>
    <dbReference type="NCBI Taxonomy" id="376686"/>
    <lineage>
        <taxon>Bacteria</taxon>
        <taxon>Pseudomonadati</taxon>
        <taxon>Bacteroidota</taxon>
        <taxon>Flavobacteriia</taxon>
        <taxon>Flavobacteriales</taxon>
        <taxon>Flavobacteriaceae</taxon>
        <taxon>Flavobacterium</taxon>
    </lineage>
</organism>
<name>TRMD_FLAJ1</name>
<evidence type="ECO:0000255" key="1">
    <source>
        <dbReference type="HAMAP-Rule" id="MF_00605"/>
    </source>
</evidence>
<feature type="chain" id="PRO_1000082518" description="tRNA (guanine-N(1)-)-methyltransferase">
    <location>
        <begin position="1"/>
        <end position="226"/>
    </location>
</feature>
<feature type="binding site" evidence="1">
    <location>
        <position position="112"/>
    </location>
    <ligand>
        <name>S-adenosyl-L-methionine</name>
        <dbReference type="ChEBI" id="CHEBI:59789"/>
    </ligand>
</feature>
<feature type="binding site" evidence="1">
    <location>
        <begin position="132"/>
        <end position="137"/>
    </location>
    <ligand>
        <name>S-adenosyl-L-methionine</name>
        <dbReference type="ChEBI" id="CHEBI:59789"/>
    </ligand>
</feature>
<keyword id="KW-0963">Cytoplasm</keyword>
<keyword id="KW-0489">Methyltransferase</keyword>
<keyword id="KW-0949">S-adenosyl-L-methionine</keyword>
<keyword id="KW-0808">Transferase</keyword>
<keyword id="KW-0819">tRNA processing</keyword>
<dbReference type="EC" id="2.1.1.228" evidence="1"/>
<dbReference type="EMBL" id="CP000685">
    <property type="protein sequence ID" value="ABQ05212.1"/>
    <property type="molecule type" value="Genomic_DNA"/>
</dbReference>
<dbReference type="RefSeq" id="WP_012024251.1">
    <property type="nucleotide sequence ID" value="NZ_MUGZ01000022.1"/>
</dbReference>
<dbReference type="SMR" id="A5FHV7"/>
<dbReference type="STRING" id="376686.Fjoh_2184"/>
<dbReference type="KEGG" id="fjo:Fjoh_2184"/>
<dbReference type="eggNOG" id="COG0336">
    <property type="taxonomic scope" value="Bacteria"/>
</dbReference>
<dbReference type="HOGENOM" id="CLU_047363_0_1_10"/>
<dbReference type="OrthoDB" id="9807416at2"/>
<dbReference type="Proteomes" id="UP000006694">
    <property type="component" value="Chromosome"/>
</dbReference>
<dbReference type="GO" id="GO:0005829">
    <property type="term" value="C:cytosol"/>
    <property type="evidence" value="ECO:0007669"/>
    <property type="project" value="TreeGrafter"/>
</dbReference>
<dbReference type="GO" id="GO:0052906">
    <property type="term" value="F:tRNA (guanine(37)-N1)-methyltransferase activity"/>
    <property type="evidence" value="ECO:0007669"/>
    <property type="project" value="UniProtKB-UniRule"/>
</dbReference>
<dbReference type="GO" id="GO:0002939">
    <property type="term" value="P:tRNA N1-guanine methylation"/>
    <property type="evidence" value="ECO:0007669"/>
    <property type="project" value="TreeGrafter"/>
</dbReference>
<dbReference type="CDD" id="cd18080">
    <property type="entry name" value="TrmD-like"/>
    <property type="match status" value="1"/>
</dbReference>
<dbReference type="FunFam" id="3.40.1280.10:FF:000001">
    <property type="entry name" value="tRNA (guanine-N(1)-)-methyltransferase"/>
    <property type="match status" value="1"/>
</dbReference>
<dbReference type="Gene3D" id="3.40.1280.10">
    <property type="match status" value="1"/>
</dbReference>
<dbReference type="Gene3D" id="1.10.1270.20">
    <property type="entry name" value="tRNA(m1g37)methyltransferase, domain 2"/>
    <property type="match status" value="1"/>
</dbReference>
<dbReference type="HAMAP" id="MF_00605">
    <property type="entry name" value="TrmD"/>
    <property type="match status" value="1"/>
</dbReference>
<dbReference type="InterPro" id="IPR029028">
    <property type="entry name" value="Alpha/beta_knot_MTases"/>
</dbReference>
<dbReference type="InterPro" id="IPR023148">
    <property type="entry name" value="tRNA_m1G_MeTrfase_C_sf"/>
</dbReference>
<dbReference type="InterPro" id="IPR002649">
    <property type="entry name" value="tRNA_m1G_MeTrfase_TrmD"/>
</dbReference>
<dbReference type="InterPro" id="IPR029026">
    <property type="entry name" value="tRNA_m1G_MTases_N"/>
</dbReference>
<dbReference type="InterPro" id="IPR016009">
    <property type="entry name" value="tRNA_MeTrfase_TRMD/TRM10"/>
</dbReference>
<dbReference type="NCBIfam" id="NF000648">
    <property type="entry name" value="PRK00026.1"/>
    <property type="match status" value="1"/>
</dbReference>
<dbReference type="NCBIfam" id="TIGR00088">
    <property type="entry name" value="trmD"/>
    <property type="match status" value="1"/>
</dbReference>
<dbReference type="PANTHER" id="PTHR46417">
    <property type="entry name" value="TRNA (GUANINE-N(1)-)-METHYLTRANSFERASE"/>
    <property type="match status" value="1"/>
</dbReference>
<dbReference type="PANTHER" id="PTHR46417:SF1">
    <property type="entry name" value="TRNA (GUANINE-N(1)-)-METHYLTRANSFERASE"/>
    <property type="match status" value="1"/>
</dbReference>
<dbReference type="Pfam" id="PF01746">
    <property type="entry name" value="tRNA_m1G_MT"/>
    <property type="match status" value="1"/>
</dbReference>
<dbReference type="PIRSF" id="PIRSF000386">
    <property type="entry name" value="tRNA_mtase"/>
    <property type="match status" value="1"/>
</dbReference>
<dbReference type="SUPFAM" id="SSF75217">
    <property type="entry name" value="alpha/beta knot"/>
    <property type="match status" value="1"/>
</dbReference>
<comment type="function">
    <text evidence="1">Specifically methylates guanosine-37 in various tRNAs.</text>
</comment>
<comment type="catalytic activity">
    <reaction evidence="1">
        <text>guanosine(37) in tRNA + S-adenosyl-L-methionine = N(1)-methylguanosine(37) in tRNA + S-adenosyl-L-homocysteine + H(+)</text>
        <dbReference type="Rhea" id="RHEA:36899"/>
        <dbReference type="Rhea" id="RHEA-COMP:10145"/>
        <dbReference type="Rhea" id="RHEA-COMP:10147"/>
        <dbReference type="ChEBI" id="CHEBI:15378"/>
        <dbReference type="ChEBI" id="CHEBI:57856"/>
        <dbReference type="ChEBI" id="CHEBI:59789"/>
        <dbReference type="ChEBI" id="CHEBI:73542"/>
        <dbReference type="ChEBI" id="CHEBI:74269"/>
        <dbReference type="EC" id="2.1.1.228"/>
    </reaction>
</comment>
<comment type="subunit">
    <text evidence="1">Homodimer.</text>
</comment>
<comment type="subcellular location">
    <subcellularLocation>
        <location evidence="1">Cytoplasm</location>
    </subcellularLocation>
</comment>
<comment type="similarity">
    <text evidence="1">Belongs to the RNA methyltransferase TrmD family.</text>
</comment>
<reference key="1">
    <citation type="journal article" date="2009" name="Appl. Environ. Microbiol.">
        <title>Novel features of the polysaccharide-digesting gliding bacterium Flavobacterium johnsoniae as revealed by genome sequence analysis.</title>
        <authorList>
            <person name="McBride M.J."/>
            <person name="Xie G."/>
            <person name="Martens E.C."/>
            <person name="Lapidus A."/>
            <person name="Henrissat B."/>
            <person name="Rhodes R.G."/>
            <person name="Goltsman E."/>
            <person name="Wang W."/>
            <person name="Xu J."/>
            <person name="Hunnicutt D.W."/>
            <person name="Staroscik A.M."/>
            <person name="Hoover T.R."/>
            <person name="Cheng Y.Q."/>
            <person name="Stein J.L."/>
        </authorList>
    </citation>
    <scope>NUCLEOTIDE SEQUENCE [LARGE SCALE GENOMIC DNA]</scope>
    <source>
        <strain>ATCC 17061 / DSM 2064 / JCM 8514 / BCRC 14874 / CCUG 350202 / NBRC 14942 / NCIMB 11054 / UW101</strain>
    </source>
</reference>
<proteinExistence type="inferred from homology"/>
<sequence length="226" mass="25660">MRIDIITVLPELLRSPFEASIMKRAIDKGLVEVHFHNLRDYTTNKQKSVDDYQFGGGAGMVMMIQPIDDCITHLKSEREYDEIIYMSPDGETLNQKMANKMSMYENIIILCGHYKGVDQRVRDHFITKEISIGDYVLSGGELGALVLSDALIRLIPGVLSDETSALTDSFQDNLLSGPIYTRPADYKGWKVPEVLTSGHAAKIEKWREDAAYEHTKNRRPDLLEEH</sequence>
<protein>
    <recommendedName>
        <fullName evidence="1">tRNA (guanine-N(1)-)-methyltransferase</fullName>
        <ecNumber evidence="1">2.1.1.228</ecNumber>
    </recommendedName>
    <alternativeName>
        <fullName evidence="1">M1G-methyltransferase</fullName>
    </alternativeName>
    <alternativeName>
        <fullName evidence="1">tRNA [GM37] methyltransferase</fullName>
    </alternativeName>
</protein>
<gene>
    <name evidence="1" type="primary">trmD</name>
    <name type="ordered locus">Fjoh_2184</name>
</gene>